<comment type="function">
    <text evidence="1">Binds to 23S rRNA. Forms part of two intersubunit bridges in the 70S ribosome.</text>
</comment>
<comment type="subunit">
    <text evidence="1">Part of the 50S ribosomal subunit. Forms a cluster with proteins L3 and L19. In the 70S ribosome, L14 and L19 interact and together make contacts with the 16S rRNA in bridges B5 and B8.</text>
</comment>
<comment type="similarity">
    <text evidence="1">Belongs to the universal ribosomal protein uL14 family.</text>
</comment>
<dbReference type="EMBL" id="CP000308">
    <property type="protein sequence ID" value="ABG15215.1"/>
    <property type="molecule type" value="Genomic_DNA"/>
</dbReference>
<dbReference type="RefSeq" id="WP_002213325.1">
    <property type="nucleotide sequence ID" value="NZ_CP009906.1"/>
</dbReference>
<dbReference type="SMR" id="Q1C2V7"/>
<dbReference type="GeneID" id="97454241"/>
<dbReference type="KEGG" id="ypa:YPA_3253"/>
<dbReference type="Proteomes" id="UP000001971">
    <property type="component" value="Chromosome"/>
</dbReference>
<dbReference type="GO" id="GO:0022625">
    <property type="term" value="C:cytosolic large ribosomal subunit"/>
    <property type="evidence" value="ECO:0007669"/>
    <property type="project" value="TreeGrafter"/>
</dbReference>
<dbReference type="GO" id="GO:0070180">
    <property type="term" value="F:large ribosomal subunit rRNA binding"/>
    <property type="evidence" value="ECO:0007669"/>
    <property type="project" value="TreeGrafter"/>
</dbReference>
<dbReference type="GO" id="GO:0003735">
    <property type="term" value="F:structural constituent of ribosome"/>
    <property type="evidence" value="ECO:0007669"/>
    <property type="project" value="InterPro"/>
</dbReference>
<dbReference type="GO" id="GO:0006412">
    <property type="term" value="P:translation"/>
    <property type="evidence" value="ECO:0007669"/>
    <property type="project" value="UniProtKB-UniRule"/>
</dbReference>
<dbReference type="CDD" id="cd00337">
    <property type="entry name" value="Ribosomal_uL14"/>
    <property type="match status" value="1"/>
</dbReference>
<dbReference type="FunFam" id="2.40.150.20:FF:000001">
    <property type="entry name" value="50S ribosomal protein L14"/>
    <property type="match status" value="1"/>
</dbReference>
<dbReference type="Gene3D" id="2.40.150.20">
    <property type="entry name" value="Ribosomal protein L14"/>
    <property type="match status" value="1"/>
</dbReference>
<dbReference type="HAMAP" id="MF_01367">
    <property type="entry name" value="Ribosomal_uL14"/>
    <property type="match status" value="1"/>
</dbReference>
<dbReference type="InterPro" id="IPR000218">
    <property type="entry name" value="Ribosomal_uL14"/>
</dbReference>
<dbReference type="InterPro" id="IPR005745">
    <property type="entry name" value="Ribosomal_uL14_bac-type"/>
</dbReference>
<dbReference type="InterPro" id="IPR019972">
    <property type="entry name" value="Ribosomal_uL14_CS"/>
</dbReference>
<dbReference type="InterPro" id="IPR036853">
    <property type="entry name" value="Ribosomal_uL14_sf"/>
</dbReference>
<dbReference type="NCBIfam" id="TIGR01067">
    <property type="entry name" value="rplN_bact"/>
    <property type="match status" value="1"/>
</dbReference>
<dbReference type="PANTHER" id="PTHR11761">
    <property type="entry name" value="50S/60S RIBOSOMAL PROTEIN L14/L23"/>
    <property type="match status" value="1"/>
</dbReference>
<dbReference type="PANTHER" id="PTHR11761:SF3">
    <property type="entry name" value="LARGE RIBOSOMAL SUBUNIT PROTEIN UL14M"/>
    <property type="match status" value="1"/>
</dbReference>
<dbReference type="Pfam" id="PF00238">
    <property type="entry name" value="Ribosomal_L14"/>
    <property type="match status" value="1"/>
</dbReference>
<dbReference type="SMART" id="SM01374">
    <property type="entry name" value="Ribosomal_L14"/>
    <property type="match status" value="1"/>
</dbReference>
<dbReference type="SUPFAM" id="SSF50193">
    <property type="entry name" value="Ribosomal protein L14"/>
    <property type="match status" value="1"/>
</dbReference>
<dbReference type="PROSITE" id="PS00049">
    <property type="entry name" value="RIBOSOMAL_L14"/>
    <property type="match status" value="1"/>
</dbReference>
<name>RL14_YERPA</name>
<proteinExistence type="inferred from homology"/>
<organism>
    <name type="scientific">Yersinia pestis bv. Antiqua (strain Antiqua)</name>
    <dbReference type="NCBI Taxonomy" id="360102"/>
    <lineage>
        <taxon>Bacteria</taxon>
        <taxon>Pseudomonadati</taxon>
        <taxon>Pseudomonadota</taxon>
        <taxon>Gammaproteobacteria</taxon>
        <taxon>Enterobacterales</taxon>
        <taxon>Yersiniaceae</taxon>
        <taxon>Yersinia</taxon>
    </lineage>
</organism>
<sequence>MIQEQTMLNVADNSGARRVMCIKVLGGSHRRYAGIGDIIKITIKEAIPRGKVKKGDVLKAVVVRTKKGVRRPDGSVIRFDGNACVILNNNSEQPIGTRIFGPVTRELRNEKFMKIISLAPEVL</sequence>
<protein>
    <recommendedName>
        <fullName evidence="1">Large ribosomal subunit protein uL14</fullName>
    </recommendedName>
    <alternativeName>
        <fullName evidence="2">50S ribosomal protein L14</fullName>
    </alternativeName>
</protein>
<feature type="chain" id="PRO_0000266592" description="Large ribosomal subunit protein uL14">
    <location>
        <begin position="1"/>
        <end position="123"/>
    </location>
</feature>
<gene>
    <name evidence="1" type="primary">rplN</name>
    <name type="ordered locus">YPA_3253</name>
</gene>
<accession>Q1C2V7</accession>
<reference key="1">
    <citation type="journal article" date="2006" name="J. Bacteriol.">
        <title>Complete genome sequence of Yersinia pestis strains Antiqua and Nepal516: evidence of gene reduction in an emerging pathogen.</title>
        <authorList>
            <person name="Chain P.S.G."/>
            <person name="Hu P."/>
            <person name="Malfatti S.A."/>
            <person name="Radnedge L."/>
            <person name="Larimer F."/>
            <person name="Vergez L.M."/>
            <person name="Worsham P."/>
            <person name="Chu M.C."/>
            <person name="Andersen G.L."/>
        </authorList>
    </citation>
    <scope>NUCLEOTIDE SEQUENCE [LARGE SCALE GENOMIC DNA]</scope>
    <source>
        <strain>Antiqua</strain>
    </source>
</reference>
<evidence type="ECO:0000255" key="1">
    <source>
        <dbReference type="HAMAP-Rule" id="MF_01367"/>
    </source>
</evidence>
<evidence type="ECO:0000305" key="2"/>
<keyword id="KW-0687">Ribonucleoprotein</keyword>
<keyword id="KW-0689">Ribosomal protein</keyword>
<keyword id="KW-0694">RNA-binding</keyword>
<keyword id="KW-0699">rRNA-binding</keyword>